<proteinExistence type="inferred from homology"/>
<keyword id="KW-0240">DNA-directed RNA polymerase</keyword>
<keyword id="KW-0548">Nucleotidyltransferase</keyword>
<keyword id="KW-0804">Transcription</keyword>
<keyword id="KW-0808">Transferase</keyword>
<gene>
    <name evidence="1" type="primary">rpoB</name>
    <name type="ordered locus">LACR_1981</name>
</gene>
<organism>
    <name type="scientific">Lactococcus lactis subsp. cremoris (strain SK11)</name>
    <dbReference type="NCBI Taxonomy" id="272622"/>
    <lineage>
        <taxon>Bacteria</taxon>
        <taxon>Bacillati</taxon>
        <taxon>Bacillota</taxon>
        <taxon>Bacilli</taxon>
        <taxon>Lactobacillales</taxon>
        <taxon>Streptococcaceae</taxon>
        <taxon>Lactococcus</taxon>
        <taxon>Lactococcus cremoris subsp. cremoris</taxon>
    </lineage>
</organism>
<name>RPOB_LACLS</name>
<sequence length="1196" mass="133217">MAGHDIKYGKHRTRRSFSRIKEVIGLPNLIEVQTLSYKNFLDEGLANVFKEMFPIDNFAGTMELEFVGYEMKTPKYTVEEARAHDANYSAPIYVTFRLVNKETGELKTQEVFFGDFPLMTEMGTFINNGSERLIVSQLVRSPGSYFHLKTDKNGLESFGHTTIPNRGAWFELDTDAKGIGYVRIDRTRKLTFTTMLRALGFGSDDEILELLGETQLLTDTIAKDVHKNPADTRVEEALKDIYDRLRPGEPKTADSSRGLLVARFFDPKRYDFAPVGRYKFNKKLALKNRLLGLTLAEPIVDPETGEILVNTDTLVTRDVLDLIEPLLDNGLGNFVVEPSDDAVIPEPITLQSIKVYSPKDSERVVTLLSNGNPDSECRVLTPADVISNISYWLGLAEGIGKVDDIDHLGNRRIRSVGELLQNQVRIGLSRMERVIRERMSSSENENITPQGLINIRPVTASIKEFFGSSQLSQFMDQHNPLSELSHKRRFSALGPGGISRDRASYEVRDVHYTHYGRMCPIETPEGPNIGLINNLSSYAKVNEYGFIMSPYRRVDRVNGIVTDEVEYLTADEEDNYTVAQANSPLTDDSRFANETVMARHTGNNIEVEASTADYMDVSPKQVIAVAAACIPFLENDDSNRALMGANMQRQAVPLIDPHAPWIGTGMEHQTARDSGAALLAKHAGVVEYVDGNEIRVRRTSGELDIYNITKYRRSNSGTSYNQRPLARLGEKVEKNDIIADGPSMENGEMALGQNPLVAYMTWEGYNFEDAVIMSERLIKDDVYTSIAIEEYESETRDTKLGPEEITREIPNVGDEALKNLDESGIIRIGAEVKDGDLLVGKVTPKGETDPTPEERLLRAIFGEKAREVRDTSLRVPHGGGGIVHDVRVFTRENGDELPSGVNKLVRVFIAQKRKIHVGDKMAGRHGNKGVVSNIVPVEDMPYLPDGTPIDIMLNPLGVPSRMNIGQVMELHLGMAARTLGIHIATPVFDGASDEDIWDTVKEAGMAADAKTVLYDGRTGEPFDNRISVGVMYMIKLHHMVDDKLHARSVGPYSLVTQQPLGGKAQFGGQRFGEMEVWALEAYGAANVLQEILTYKSDDVIGRTRAYEAIVKGERIPKPGLPESFRVLVKELQSLGLDMKVFDADRNVLDLRELDEDEVMTRPDNTEITPEMLEAQEAIVAQAEAEEEALINADIEK</sequence>
<dbReference type="EC" id="2.7.7.6" evidence="1"/>
<dbReference type="EMBL" id="CP000425">
    <property type="protein sequence ID" value="ABJ73463.1"/>
    <property type="molecule type" value="Genomic_DNA"/>
</dbReference>
<dbReference type="RefSeq" id="WP_011676807.1">
    <property type="nucleotide sequence ID" value="NC_008527.1"/>
</dbReference>
<dbReference type="SMR" id="Q02X59"/>
<dbReference type="KEGG" id="llc:LACR_1981"/>
<dbReference type="HOGENOM" id="CLU_000524_4_1_9"/>
<dbReference type="Proteomes" id="UP000000240">
    <property type="component" value="Chromosome"/>
</dbReference>
<dbReference type="GO" id="GO:0000428">
    <property type="term" value="C:DNA-directed RNA polymerase complex"/>
    <property type="evidence" value="ECO:0007669"/>
    <property type="project" value="UniProtKB-KW"/>
</dbReference>
<dbReference type="GO" id="GO:0003677">
    <property type="term" value="F:DNA binding"/>
    <property type="evidence" value="ECO:0007669"/>
    <property type="project" value="UniProtKB-UniRule"/>
</dbReference>
<dbReference type="GO" id="GO:0003899">
    <property type="term" value="F:DNA-directed RNA polymerase activity"/>
    <property type="evidence" value="ECO:0007669"/>
    <property type="project" value="UniProtKB-UniRule"/>
</dbReference>
<dbReference type="GO" id="GO:0032549">
    <property type="term" value="F:ribonucleoside binding"/>
    <property type="evidence" value="ECO:0007669"/>
    <property type="project" value="InterPro"/>
</dbReference>
<dbReference type="GO" id="GO:0006351">
    <property type="term" value="P:DNA-templated transcription"/>
    <property type="evidence" value="ECO:0007669"/>
    <property type="project" value="UniProtKB-UniRule"/>
</dbReference>
<dbReference type="CDD" id="cd00653">
    <property type="entry name" value="RNA_pol_B_RPB2"/>
    <property type="match status" value="1"/>
</dbReference>
<dbReference type="Gene3D" id="2.40.50.100">
    <property type="match status" value="1"/>
</dbReference>
<dbReference type="Gene3D" id="2.40.50.150">
    <property type="match status" value="1"/>
</dbReference>
<dbReference type="Gene3D" id="3.90.1100.10">
    <property type="match status" value="3"/>
</dbReference>
<dbReference type="Gene3D" id="2.40.270.10">
    <property type="entry name" value="DNA-directed RNA polymerase, subunit 2, domain 6"/>
    <property type="match status" value="1"/>
</dbReference>
<dbReference type="Gene3D" id="3.90.1800.10">
    <property type="entry name" value="RNA polymerase alpha subunit dimerisation domain"/>
    <property type="match status" value="1"/>
</dbReference>
<dbReference type="Gene3D" id="3.90.1110.10">
    <property type="entry name" value="RNA polymerase Rpb2, domain 2"/>
    <property type="match status" value="1"/>
</dbReference>
<dbReference type="HAMAP" id="MF_01321">
    <property type="entry name" value="RNApol_bact_RpoB"/>
    <property type="match status" value="1"/>
</dbReference>
<dbReference type="InterPro" id="IPR019462">
    <property type="entry name" value="DNA-dir_RNA_pol_bsu_external_1"/>
</dbReference>
<dbReference type="InterPro" id="IPR015712">
    <property type="entry name" value="DNA-dir_RNA_pol_su2"/>
</dbReference>
<dbReference type="InterPro" id="IPR007120">
    <property type="entry name" value="DNA-dir_RNAP_su2_dom"/>
</dbReference>
<dbReference type="InterPro" id="IPR037033">
    <property type="entry name" value="DNA-dir_RNAP_su2_hyb_sf"/>
</dbReference>
<dbReference type="InterPro" id="IPR010243">
    <property type="entry name" value="RNA_pol_bsu_bac"/>
</dbReference>
<dbReference type="InterPro" id="IPR007121">
    <property type="entry name" value="RNA_pol_bsu_CS"/>
</dbReference>
<dbReference type="InterPro" id="IPR007644">
    <property type="entry name" value="RNA_pol_bsu_protrusion"/>
</dbReference>
<dbReference type="InterPro" id="IPR007642">
    <property type="entry name" value="RNA_pol_Rpb2_2"/>
</dbReference>
<dbReference type="InterPro" id="IPR037034">
    <property type="entry name" value="RNA_pol_Rpb2_2_sf"/>
</dbReference>
<dbReference type="InterPro" id="IPR007645">
    <property type="entry name" value="RNA_pol_Rpb2_3"/>
</dbReference>
<dbReference type="InterPro" id="IPR007641">
    <property type="entry name" value="RNA_pol_Rpb2_7"/>
</dbReference>
<dbReference type="InterPro" id="IPR014724">
    <property type="entry name" value="RNA_pol_RPB2_OB-fold"/>
</dbReference>
<dbReference type="NCBIfam" id="NF001616">
    <property type="entry name" value="PRK00405.1"/>
    <property type="match status" value="1"/>
</dbReference>
<dbReference type="NCBIfam" id="TIGR02013">
    <property type="entry name" value="rpoB"/>
    <property type="match status" value="1"/>
</dbReference>
<dbReference type="PANTHER" id="PTHR20856">
    <property type="entry name" value="DNA-DIRECTED RNA POLYMERASE I SUBUNIT 2"/>
    <property type="match status" value="1"/>
</dbReference>
<dbReference type="Pfam" id="PF04563">
    <property type="entry name" value="RNA_pol_Rpb2_1"/>
    <property type="match status" value="1"/>
</dbReference>
<dbReference type="Pfam" id="PF04561">
    <property type="entry name" value="RNA_pol_Rpb2_2"/>
    <property type="match status" value="2"/>
</dbReference>
<dbReference type="Pfam" id="PF04565">
    <property type="entry name" value="RNA_pol_Rpb2_3"/>
    <property type="match status" value="1"/>
</dbReference>
<dbReference type="Pfam" id="PF10385">
    <property type="entry name" value="RNA_pol_Rpb2_45"/>
    <property type="match status" value="1"/>
</dbReference>
<dbReference type="Pfam" id="PF00562">
    <property type="entry name" value="RNA_pol_Rpb2_6"/>
    <property type="match status" value="1"/>
</dbReference>
<dbReference type="Pfam" id="PF04560">
    <property type="entry name" value="RNA_pol_Rpb2_7"/>
    <property type="match status" value="1"/>
</dbReference>
<dbReference type="SUPFAM" id="SSF64484">
    <property type="entry name" value="beta and beta-prime subunits of DNA dependent RNA-polymerase"/>
    <property type="match status" value="1"/>
</dbReference>
<dbReference type="PROSITE" id="PS01166">
    <property type="entry name" value="RNA_POL_BETA"/>
    <property type="match status" value="1"/>
</dbReference>
<accession>Q02X59</accession>
<evidence type="ECO:0000255" key="1">
    <source>
        <dbReference type="HAMAP-Rule" id="MF_01321"/>
    </source>
</evidence>
<feature type="chain" id="PRO_0000300336" description="DNA-directed RNA polymerase subunit beta">
    <location>
        <begin position="1"/>
        <end position="1196"/>
    </location>
</feature>
<comment type="function">
    <text evidence="1">DNA-dependent RNA polymerase catalyzes the transcription of DNA into RNA using the four ribonucleoside triphosphates as substrates.</text>
</comment>
<comment type="catalytic activity">
    <reaction evidence="1">
        <text>RNA(n) + a ribonucleoside 5'-triphosphate = RNA(n+1) + diphosphate</text>
        <dbReference type="Rhea" id="RHEA:21248"/>
        <dbReference type="Rhea" id="RHEA-COMP:14527"/>
        <dbReference type="Rhea" id="RHEA-COMP:17342"/>
        <dbReference type="ChEBI" id="CHEBI:33019"/>
        <dbReference type="ChEBI" id="CHEBI:61557"/>
        <dbReference type="ChEBI" id="CHEBI:140395"/>
        <dbReference type="EC" id="2.7.7.6"/>
    </reaction>
</comment>
<comment type="subunit">
    <text evidence="1">The RNAP catalytic core consists of 2 alpha, 1 beta, 1 beta' and 1 omega subunit. When a sigma factor is associated with the core the holoenzyme is formed, which can initiate transcription.</text>
</comment>
<comment type="similarity">
    <text evidence="1">Belongs to the RNA polymerase beta chain family.</text>
</comment>
<reference key="1">
    <citation type="journal article" date="2006" name="Proc. Natl. Acad. Sci. U.S.A.">
        <title>Comparative genomics of the lactic acid bacteria.</title>
        <authorList>
            <person name="Makarova K.S."/>
            <person name="Slesarev A."/>
            <person name="Wolf Y.I."/>
            <person name="Sorokin A."/>
            <person name="Mirkin B."/>
            <person name="Koonin E.V."/>
            <person name="Pavlov A."/>
            <person name="Pavlova N."/>
            <person name="Karamychev V."/>
            <person name="Polouchine N."/>
            <person name="Shakhova V."/>
            <person name="Grigoriev I."/>
            <person name="Lou Y."/>
            <person name="Rohksar D."/>
            <person name="Lucas S."/>
            <person name="Huang K."/>
            <person name="Goodstein D.M."/>
            <person name="Hawkins T."/>
            <person name="Plengvidhya V."/>
            <person name="Welker D."/>
            <person name="Hughes J."/>
            <person name="Goh Y."/>
            <person name="Benson A."/>
            <person name="Baldwin K."/>
            <person name="Lee J.-H."/>
            <person name="Diaz-Muniz I."/>
            <person name="Dosti B."/>
            <person name="Smeianov V."/>
            <person name="Wechter W."/>
            <person name="Barabote R."/>
            <person name="Lorca G."/>
            <person name="Altermann E."/>
            <person name="Barrangou R."/>
            <person name="Ganesan B."/>
            <person name="Xie Y."/>
            <person name="Rawsthorne H."/>
            <person name="Tamir D."/>
            <person name="Parker C."/>
            <person name="Breidt F."/>
            <person name="Broadbent J.R."/>
            <person name="Hutkins R."/>
            <person name="O'Sullivan D."/>
            <person name="Steele J."/>
            <person name="Unlu G."/>
            <person name="Saier M.H. Jr."/>
            <person name="Klaenhammer T."/>
            <person name="Richardson P."/>
            <person name="Kozyavkin S."/>
            <person name="Weimer B.C."/>
            <person name="Mills D.A."/>
        </authorList>
    </citation>
    <scope>NUCLEOTIDE SEQUENCE [LARGE SCALE GENOMIC DNA]</scope>
    <source>
        <strain>SK11</strain>
    </source>
</reference>
<protein>
    <recommendedName>
        <fullName evidence="1">DNA-directed RNA polymerase subunit beta</fullName>
        <shortName evidence="1">RNAP subunit beta</shortName>
        <ecNumber evidence="1">2.7.7.6</ecNumber>
    </recommendedName>
    <alternativeName>
        <fullName evidence="1">RNA polymerase subunit beta</fullName>
    </alternativeName>
    <alternativeName>
        <fullName evidence="1">Transcriptase subunit beta</fullName>
    </alternativeName>
</protein>